<reference key="1">
    <citation type="journal article" date="2008" name="BMC Genomics">
        <title>The missing link: Bordetella petrii is endowed with both the metabolic versatility of environmental bacteria and virulence traits of pathogenic Bordetellae.</title>
        <authorList>
            <person name="Gross R."/>
            <person name="Guzman C.A."/>
            <person name="Sebaihia M."/>
            <person name="Martin dos Santos V.A.P."/>
            <person name="Pieper D.H."/>
            <person name="Koebnik R."/>
            <person name="Lechner M."/>
            <person name="Bartels D."/>
            <person name="Buhrmester J."/>
            <person name="Choudhuri J.V."/>
            <person name="Ebensen T."/>
            <person name="Gaigalat L."/>
            <person name="Herrmann S."/>
            <person name="Khachane A.N."/>
            <person name="Larisch C."/>
            <person name="Link S."/>
            <person name="Linke B."/>
            <person name="Meyer F."/>
            <person name="Mormann S."/>
            <person name="Nakunst D."/>
            <person name="Rueckert C."/>
            <person name="Schneiker-Bekel S."/>
            <person name="Schulze K."/>
            <person name="Voerholter F.-J."/>
            <person name="Yevsa T."/>
            <person name="Engle J.T."/>
            <person name="Goldman W.E."/>
            <person name="Puehler A."/>
            <person name="Goebel U.B."/>
            <person name="Goesmann A."/>
            <person name="Bloecker H."/>
            <person name="Kaiser O."/>
            <person name="Martinez-Arias R."/>
        </authorList>
    </citation>
    <scope>NUCLEOTIDE SEQUENCE [LARGE SCALE GENOMIC DNA]</scope>
    <source>
        <strain>ATCC BAA-461 / DSM 12804 / CCUG 43448</strain>
    </source>
</reference>
<accession>A9HZV9</accession>
<sequence length="212" mass="22852">MPVHEIRHPLIRHKLGIMRRADLSTKSFRELSQEVGALLTYEASKDLPLAESTVEGWCGTVTVEKIAGKKVTVVPILRAGIGMLDGVLSLIPGAKVSVVGVARNEETLQAHTYLERLVGELDQRLALIVDPMLATGGSMLATIDMLKRAGCREIRALVLVAAPVGIKAVLDRHPDVHIYTASIDDGLNENGYIMPGLGDAGDRIFGTKQKAE</sequence>
<name>UPP_BORPD</name>
<protein>
    <recommendedName>
        <fullName evidence="1">Uracil phosphoribosyltransferase</fullName>
        <ecNumber evidence="1">2.4.2.9</ecNumber>
    </recommendedName>
    <alternativeName>
        <fullName evidence="1">UMP pyrophosphorylase</fullName>
    </alternativeName>
    <alternativeName>
        <fullName evidence="1">UPRTase</fullName>
    </alternativeName>
</protein>
<dbReference type="EC" id="2.4.2.9" evidence="1"/>
<dbReference type="EMBL" id="AM902716">
    <property type="protein sequence ID" value="CAP43987.1"/>
    <property type="molecule type" value="Genomic_DNA"/>
</dbReference>
<dbReference type="SMR" id="A9HZV9"/>
<dbReference type="STRING" id="94624.Bpet3644"/>
<dbReference type="KEGG" id="bpt:Bpet3644"/>
<dbReference type="eggNOG" id="COG0035">
    <property type="taxonomic scope" value="Bacteria"/>
</dbReference>
<dbReference type="UniPathway" id="UPA00574">
    <property type="reaction ID" value="UER00636"/>
</dbReference>
<dbReference type="Proteomes" id="UP000001225">
    <property type="component" value="Chromosome"/>
</dbReference>
<dbReference type="GO" id="GO:0005525">
    <property type="term" value="F:GTP binding"/>
    <property type="evidence" value="ECO:0007669"/>
    <property type="project" value="UniProtKB-KW"/>
</dbReference>
<dbReference type="GO" id="GO:0000287">
    <property type="term" value="F:magnesium ion binding"/>
    <property type="evidence" value="ECO:0007669"/>
    <property type="project" value="UniProtKB-UniRule"/>
</dbReference>
<dbReference type="GO" id="GO:0004845">
    <property type="term" value="F:uracil phosphoribosyltransferase activity"/>
    <property type="evidence" value="ECO:0007669"/>
    <property type="project" value="UniProtKB-UniRule"/>
</dbReference>
<dbReference type="GO" id="GO:0044206">
    <property type="term" value="P:UMP salvage"/>
    <property type="evidence" value="ECO:0007669"/>
    <property type="project" value="UniProtKB-UniRule"/>
</dbReference>
<dbReference type="GO" id="GO:0006223">
    <property type="term" value="P:uracil salvage"/>
    <property type="evidence" value="ECO:0007669"/>
    <property type="project" value="InterPro"/>
</dbReference>
<dbReference type="CDD" id="cd06223">
    <property type="entry name" value="PRTases_typeI"/>
    <property type="match status" value="1"/>
</dbReference>
<dbReference type="FunFam" id="3.40.50.2020:FF:000003">
    <property type="entry name" value="Uracil phosphoribosyltransferase"/>
    <property type="match status" value="1"/>
</dbReference>
<dbReference type="Gene3D" id="3.40.50.2020">
    <property type="match status" value="1"/>
</dbReference>
<dbReference type="HAMAP" id="MF_01218_B">
    <property type="entry name" value="Upp_B"/>
    <property type="match status" value="1"/>
</dbReference>
<dbReference type="InterPro" id="IPR000836">
    <property type="entry name" value="PRibTrfase_dom"/>
</dbReference>
<dbReference type="InterPro" id="IPR029057">
    <property type="entry name" value="PRTase-like"/>
</dbReference>
<dbReference type="InterPro" id="IPR034332">
    <property type="entry name" value="Upp_B"/>
</dbReference>
<dbReference type="InterPro" id="IPR050054">
    <property type="entry name" value="UPRTase/APRTase"/>
</dbReference>
<dbReference type="InterPro" id="IPR005765">
    <property type="entry name" value="Ura_phspho_trans"/>
</dbReference>
<dbReference type="NCBIfam" id="NF001097">
    <property type="entry name" value="PRK00129.1"/>
    <property type="match status" value="1"/>
</dbReference>
<dbReference type="NCBIfam" id="TIGR01091">
    <property type="entry name" value="upp"/>
    <property type="match status" value="1"/>
</dbReference>
<dbReference type="PANTHER" id="PTHR32315">
    <property type="entry name" value="ADENINE PHOSPHORIBOSYLTRANSFERASE"/>
    <property type="match status" value="1"/>
</dbReference>
<dbReference type="PANTHER" id="PTHR32315:SF4">
    <property type="entry name" value="URACIL PHOSPHORIBOSYLTRANSFERASE, CHLOROPLASTIC"/>
    <property type="match status" value="1"/>
</dbReference>
<dbReference type="Pfam" id="PF14681">
    <property type="entry name" value="UPRTase"/>
    <property type="match status" value="1"/>
</dbReference>
<dbReference type="SUPFAM" id="SSF53271">
    <property type="entry name" value="PRTase-like"/>
    <property type="match status" value="1"/>
</dbReference>
<organism>
    <name type="scientific">Bordetella petrii (strain ATCC BAA-461 / DSM 12804 / CCUG 43448)</name>
    <dbReference type="NCBI Taxonomy" id="340100"/>
    <lineage>
        <taxon>Bacteria</taxon>
        <taxon>Pseudomonadati</taxon>
        <taxon>Pseudomonadota</taxon>
        <taxon>Betaproteobacteria</taxon>
        <taxon>Burkholderiales</taxon>
        <taxon>Alcaligenaceae</taxon>
        <taxon>Bordetella</taxon>
    </lineage>
</organism>
<feature type="chain" id="PRO_1000139099" description="Uracil phosphoribosyltransferase">
    <location>
        <begin position="1"/>
        <end position="212"/>
    </location>
</feature>
<feature type="binding site" evidence="1">
    <location>
        <position position="78"/>
    </location>
    <ligand>
        <name>5-phospho-alpha-D-ribose 1-diphosphate</name>
        <dbReference type="ChEBI" id="CHEBI:58017"/>
    </ligand>
</feature>
<feature type="binding site" evidence="1">
    <location>
        <position position="103"/>
    </location>
    <ligand>
        <name>5-phospho-alpha-D-ribose 1-diphosphate</name>
        <dbReference type="ChEBI" id="CHEBI:58017"/>
    </ligand>
</feature>
<feature type="binding site" evidence="1">
    <location>
        <begin position="130"/>
        <end position="138"/>
    </location>
    <ligand>
        <name>5-phospho-alpha-D-ribose 1-diphosphate</name>
        <dbReference type="ChEBI" id="CHEBI:58017"/>
    </ligand>
</feature>
<feature type="binding site" evidence="1">
    <location>
        <position position="193"/>
    </location>
    <ligand>
        <name>uracil</name>
        <dbReference type="ChEBI" id="CHEBI:17568"/>
    </ligand>
</feature>
<feature type="binding site" evidence="1">
    <location>
        <begin position="198"/>
        <end position="200"/>
    </location>
    <ligand>
        <name>uracil</name>
        <dbReference type="ChEBI" id="CHEBI:17568"/>
    </ligand>
</feature>
<feature type="binding site" evidence="1">
    <location>
        <position position="199"/>
    </location>
    <ligand>
        <name>5-phospho-alpha-D-ribose 1-diphosphate</name>
        <dbReference type="ChEBI" id="CHEBI:58017"/>
    </ligand>
</feature>
<keyword id="KW-0021">Allosteric enzyme</keyword>
<keyword id="KW-0328">Glycosyltransferase</keyword>
<keyword id="KW-0342">GTP-binding</keyword>
<keyword id="KW-0460">Magnesium</keyword>
<keyword id="KW-0547">Nucleotide-binding</keyword>
<keyword id="KW-0808">Transferase</keyword>
<evidence type="ECO:0000255" key="1">
    <source>
        <dbReference type="HAMAP-Rule" id="MF_01218"/>
    </source>
</evidence>
<proteinExistence type="inferred from homology"/>
<gene>
    <name evidence="1" type="primary">upp</name>
    <name type="ordered locus">Bpet3644</name>
</gene>
<comment type="function">
    <text evidence="1">Catalyzes the conversion of uracil and 5-phospho-alpha-D-ribose 1-diphosphate (PRPP) to UMP and diphosphate.</text>
</comment>
<comment type="catalytic activity">
    <reaction evidence="1">
        <text>UMP + diphosphate = 5-phospho-alpha-D-ribose 1-diphosphate + uracil</text>
        <dbReference type="Rhea" id="RHEA:13017"/>
        <dbReference type="ChEBI" id="CHEBI:17568"/>
        <dbReference type="ChEBI" id="CHEBI:33019"/>
        <dbReference type="ChEBI" id="CHEBI:57865"/>
        <dbReference type="ChEBI" id="CHEBI:58017"/>
        <dbReference type="EC" id="2.4.2.9"/>
    </reaction>
</comment>
<comment type="cofactor">
    <cofactor evidence="1">
        <name>Mg(2+)</name>
        <dbReference type="ChEBI" id="CHEBI:18420"/>
    </cofactor>
    <text evidence="1">Binds 1 Mg(2+) ion per subunit. The magnesium is bound as Mg-PRPP.</text>
</comment>
<comment type="activity regulation">
    <text evidence="1">Allosterically activated by GTP.</text>
</comment>
<comment type="pathway">
    <text evidence="1">Pyrimidine metabolism; UMP biosynthesis via salvage pathway; UMP from uracil: step 1/1.</text>
</comment>
<comment type="similarity">
    <text evidence="1">Belongs to the UPRTase family.</text>
</comment>